<evidence type="ECO:0000250" key="1"/>
<evidence type="ECO:0000256" key="2">
    <source>
        <dbReference type="SAM" id="MobiDB-lite"/>
    </source>
</evidence>
<evidence type="ECO:0000269" key="3">
    <source>
    </source>
</evidence>
<evidence type="ECO:0000269" key="4">
    <source>
    </source>
</evidence>
<evidence type="ECO:0000305" key="5"/>
<sequence length="612" mass="68424">MATAATIPSVATATAAALGEVEDEGLLASLFRDRFPEAQWRERPDVGRYLRELSGSGLERLRREPERLAEERAQLLQQTRDLAFANYKTFIRGAECTERIHRLFGDVEASLGRLLDRLPSFQQSCRNFVKEAEEISSNRRMNSLTLNRHTEILEILEIPQLMDTCVRNSYYEEALELAAYVRRLERKYSSIPVIQGIVNEVRQSMQLMLSQLIQQLRTNIQLPACLRVIGYLRRMDVFTEAELRVKFLQARDAWLRSILTAIPNDDPYFHITKTIEASRVHLFDIITQYRAIFSDEDPLLPPAMGEHTVNESAIFHGWVLQKVSQFLQVLETDLYRGIGGHLDSLLGQCMYFGLSFSRVGADFRGQLAPVFQRVAISTFQKAIQETVEKFQEEMNSYMLISAPAILGTSNMPAAVPATQPGTLQPPMVLLDFPPLACFLNNILVAFNDLRLCCPVALAQDVTGALEDALAKVTKIILAFHRAEEAAFSSGEQELFVQFCTVFLEDLVPYLNRCLQVLFPPAQIAQTLGIPPTQLSKYGNLGHVNIGAIQEPLAFILPKRETLFTLDDQALGPELTAPAPEPPAEEPRLEPAGPACPEGGRAETQAEPPSVGP</sequence>
<name>COG8_HUMAN</name>
<reference key="1">
    <citation type="journal article" date="2004" name="Nat. Genet.">
        <title>Complete sequencing and characterization of 21,243 full-length human cDNAs.</title>
        <authorList>
            <person name="Ota T."/>
            <person name="Suzuki Y."/>
            <person name="Nishikawa T."/>
            <person name="Otsuki T."/>
            <person name="Sugiyama T."/>
            <person name="Irie R."/>
            <person name="Wakamatsu A."/>
            <person name="Hayashi K."/>
            <person name="Sato H."/>
            <person name="Nagai K."/>
            <person name="Kimura K."/>
            <person name="Makita H."/>
            <person name="Sekine M."/>
            <person name="Obayashi M."/>
            <person name="Nishi T."/>
            <person name="Shibahara T."/>
            <person name="Tanaka T."/>
            <person name="Ishii S."/>
            <person name="Yamamoto J."/>
            <person name="Saito K."/>
            <person name="Kawai Y."/>
            <person name="Isono Y."/>
            <person name="Nakamura Y."/>
            <person name="Nagahari K."/>
            <person name="Murakami K."/>
            <person name="Yasuda T."/>
            <person name="Iwayanagi T."/>
            <person name="Wagatsuma M."/>
            <person name="Shiratori A."/>
            <person name="Sudo H."/>
            <person name="Hosoiri T."/>
            <person name="Kaku Y."/>
            <person name="Kodaira H."/>
            <person name="Kondo H."/>
            <person name="Sugawara M."/>
            <person name="Takahashi M."/>
            <person name="Kanda K."/>
            <person name="Yokoi T."/>
            <person name="Furuya T."/>
            <person name="Kikkawa E."/>
            <person name="Omura Y."/>
            <person name="Abe K."/>
            <person name="Kamihara K."/>
            <person name="Katsuta N."/>
            <person name="Sato K."/>
            <person name="Tanikawa M."/>
            <person name="Yamazaki M."/>
            <person name="Ninomiya K."/>
            <person name="Ishibashi T."/>
            <person name="Yamashita H."/>
            <person name="Murakawa K."/>
            <person name="Fujimori K."/>
            <person name="Tanai H."/>
            <person name="Kimata M."/>
            <person name="Watanabe M."/>
            <person name="Hiraoka S."/>
            <person name="Chiba Y."/>
            <person name="Ishida S."/>
            <person name="Ono Y."/>
            <person name="Takiguchi S."/>
            <person name="Watanabe S."/>
            <person name="Yosida M."/>
            <person name="Hotuta T."/>
            <person name="Kusano J."/>
            <person name="Kanehori K."/>
            <person name="Takahashi-Fujii A."/>
            <person name="Hara H."/>
            <person name="Tanase T.-O."/>
            <person name="Nomura Y."/>
            <person name="Togiya S."/>
            <person name="Komai F."/>
            <person name="Hara R."/>
            <person name="Takeuchi K."/>
            <person name="Arita M."/>
            <person name="Imose N."/>
            <person name="Musashino K."/>
            <person name="Yuuki H."/>
            <person name="Oshima A."/>
            <person name="Sasaki N."/>
            <person name="Aotsuka S."/>
            <person name="Yoshikawa Y."/>
            <person name="Matsunawa H."/>
            <person name="Ichihara T."/>
            <person name="Shiohata N."/>
            <person name="Sano S."/>
            <person name="Moriya S."/>
            <person name="Momiyama H."/>
            <person name="Satoh N."/>
            <person name="Takami S."/>
            <person name="Terashima Y."/>
            <person name="Suzuki O."/>
            <person name="Nakagawa S."/>
            <person name="Senoh A."/>
            <person name="Mizoguchi H."/>
            <person name="Goto Y."/>
            <person name="Shimizu F."/>
            <person name="Wakebe H."/>
            <person name="Hishigaki H."/>
            <person name="Watanabe T."/>
            <person name="Sugiyama A."/>
            <person name="Takemoto M."/>
            <person name="Kawakami B."/>
            <person name="Yamazaki M."/>
            <person name="Watanabe K."/>
            <person name="Kumagai A."/>
            <person name="Itakura S."/>
            <person name="Fukuzumi Y."/>
            <person name="Fujimori Y."/>
            <person name="Komiyama M."/>
            <person name="Tashiro H."/>
            <person name="Tanigami A."/>
            <person name="Fujiwara T."/>
            <person name="Ono T."/>
            <person name="Yamada K."/>
            <person name="Fujii Y."/>
            <person name="Ozaki K."/>
            <person name="Hirao M."/>
            <person name="Ohmori Y."/>
            <person name="Kawabata A."/>
            <person name="Hikiji T."/>
            <person name="Kobatake N."/>
            <person name="Inagaki H."/>
            <person name="Ikema Y."/>
            <person name="Okamoto S."/>
            <person name="Okitani R."/>
            <person name="Kawakami T."/>
            <person name="Noguchi S."/>
            <person name="Itoh T."/>
            <person name="Shigeta K."/>
            <person name="Senba T."/>
            <person name="Matsumura K."/>
            <person name="Nakajima Y."/>
            <person name="Mizuno T."/>
            <person name="Morinaga M."/>
            <person name="Sasaki M."/>
            <person name="Togashi T."/>
            <person name="Oyama M."/>
            <person name="Hata H."/>
            <person name="Watanabe M."/>
            <person name="Komatsu T."/>
            <person name="Mizushima-Sugano J."/>
            <person name="Satoh T."/>
            <person name="Shirai Y."/>
            <person name="Takahashi Y."/>
            <person name="Nakagawa K."/>
            <person name="Okumura K."/>
            <person name="Nagase T."/>
            <person name="Nomura N."/>
            <person name="Kikuchi H."/>
            <person name="Masuho Y."/>
            <person name="Yamashita R."/>
            <person name="Nakai K."/>
            <person name="Yada T."/>
            <person name="Nakamura Y."/>
            <person name="Ohara O."/>
            <person name="Isogai T."/>
            <person name="Sugano S."/>
        </authorList>
    </citation>
    <scope>NUCLEOTIDE SEQUENCE [LARGE SCALE MRNA]</scope>
</reference>
<reference key="2">
    <citation type="submission" date="2005-07" db="EMBL/GenBank/DDBJ databases">
        <authorList>
            <person name="Mural R.J."/>
            <person name="Istrail S."/>
            <person name="Sutton G.G."/>
            <person name="Florea L."/>
            <person name="Halpern A.L."/>
            <person name="Mobarry C.M."/>
            <person name="Lippert R."/>
            <person name="Walenz B."/>
            <person name="Shatkay H."/>
            <person name="Dew I."/>
            <person name="Miller J.R."/>
            <person name="Flanigan M.J."/>
            <person name="Edwards N.J."/>
            <person name="Bolanos R."/>
            <person name="Fasulo D."/>
            <person name="Halldorsson B.V."/>
            <person name="Hannenhalli S."/>
            <person name="Turner R."/>
            <person name="Yooseph S."/>
            <person name="Lu F."/>
            <person name="Nusskern D.R."/>
            <person name="Shue B.C."/>
            <person name="Zheng X.H."/>
            <person name="Zhong F."/>
            <person name="Delcher A.L."/>
            <person name="Huson D.H."/>
            <person name="Kravitz S.A."/>
            <person name="Mouchard L."/>
            <person name="Reinert K."/>
            <person name="Remington K.A."/>
            <person name="Clark A.G."/>
            <person name="Waterman M.S."/>
            <person name="Eichler E.E."/>
            <person name="Adams M.D."/>
            <person name="Hunkapiller M.W."/>
            <person name="Myers E.W."/>
            <person name="Venter J.C."/>
        </authorList>
    </citation>
    <scope>NUCLEOTIDE SEQUENCE [LARGE SCALE GENOMIC DNA]</scope>
</reference>
<reference key="3">
    <citation type="journal article" date="2004" name="Genome Res.">
        <title>The status, quality, and expansion of the NIH full-length cDNA project: the Mammalian Gene Collection (MGC).</title>
        <authorList>
            <consortium name="The MGC Project Team"/>
        </authorList>
    </citation>
    <scope>NUCLEOTIDE SEQUENCE [LARGE SCALE MRNA]</scope>
</reference>
<reference key="4">
    <citation type="journal article" date="2001" name="Dev. Cell">
        <title>The Sec34/35 Golgi transport complex is related to the exocyst, defining a family of complexes involved in multiple steps of membrane traffic.</title>
        <authorList>
            <person name="Whyte J.R."/>
            <person name="Munro S."/>
        </authorList>
    </citation>
    <scope>SUBCELLULAR LOCATION</scope>
</reference>
<reference key="5">
    <citation type="journal article" date="2007" name="Hum. Mol. Genet.">
        <title>COG8 deficiency causes new congenital disorder of glycosylation type IIh.</title>
        <authorList>
            <person name="Kranz C."/>
            <person name="Ng B.G."/>
            <person name="Sun L."/>
            <person name="Sharma V."/>
            <person name="Eklund E.A."/>
            <person name="Miura Y."/>
            <person name="Ungar D."/>
            <person name="Lupashin V."/>
            <person name="Winkel R.D."/>
            <person name="Cipollo J.F."/>
            <person name="Costello C.E."/>
            <person name="Loh E."/>
            <person name="Hong W."/>
            <person name="Freeze H.H."/>
        </authorList>
    </citation>
    <scope>INVOLVEMENT IN CDG2H</scope>
</reference>
<reference key="6">
    <citation type="journal article" date="2011" name="BMC Syst. Biol.">
        <title>Initial characterization of the human central proteome.</title>
        <authorList>
            <person name="Burkard T.R."/>
            <person name="Planyavsky M."/>
            <person name="Kaupe I."/>
            <person name="Breitwieser F.P."/>
            <person name="Buerckstuemmer T."/>
            <person name="Bennett K.L."/>
            <person name="Superti-Furga G."/>
            <person name="Colinge J."/>
        </authorList>
    </citation>
    <scope>IDENTIFICATION BY MASS SPECTROMETRY [LARGE SCALE ANALYSIS]</scope>
</reference>
<comment type="function">
    <text evidence="1">Required for normal Golgi function.</text>
</comment>
<comment type="subunit">
    <text>Component of the conserved oligomeric Golgi complex which is composed of eight different subunits and is required for normal Golgi morphology and localization.</text>
</comment>
<comment type="interaction">
    <interactant intactId="EBI-720875">
        <id>Q96MW5</id>
    </interactant>
    <interactant intactId="EBI-10988864">
        <id>P46379-2</id>
        <label>BAG6</label>
    </interactant>
    <organismsDiffer>false</organismsDiffer>
    <experiments>3</experiments>
</comment>
<comment type="interaction">
    <interactant intactId="EBI-720875">
        <id>Q96MW5</id>
    </interactant>
    <interactant intactId="EBI-744104">
        <id>P55040</id>
        <label>GEM</label>
    </interactant>
    <organismsDiffer>false</organismsDiffer>
    <experiments>3</experiments>
</comment>
<comment type="interaction">
    <interactant intactId="EBI-720875">
        <id>Q96MW5</id>
    </interactant>
    <interactant intactId="EBI-16429135">
        <id>A0A0S2Z4Q4</id>
        <label>HGS</label>
    </interactant>
    <organismsDiffer>false</organismsDiffer>
    <experiments>3</experiments>
</comment>
<comment type="interaction">
    <interactant intactId="EBI-720875">
        <id>Q96MW5</id>
    </interactant>
    <interactant intactId="EBI-740220">
        <id>O14964</id>
        <label>HGS</label>
    </interactant>
    <organismsDiffer>false</organismsDiffer>
    <experiments>3</experiments>
</comment>
<comment type="interaction">
    <interactant intactId="EBI-720875">
        <id>Q96MW5</id>
    </interactant>
    <interactant intactId="EBI-466029">
        <id>P42858</id>
        <label>HTT</label>
    </interactant>
    <organismsDiffer>false</organismsDiffer>
    <experiments>12</experiments>
</comment>
<comment type="interaction">
    <interactant intactId="EBI-720875">
        <id>Q96MW5</id>
    </interactant>
    <interactant intactId="EBI-10975473">
        <id>O60333-2</id>
        <label>KIF1B</label>
    </interactant>
    <organismsDiffer>false</organismsDiffer>
    <experiments>3</experiments>
</comment>
<comment type="interaction">
    <interactant intactId="EBI-720875">
        <id>Q96MW5</id>
    </interactant>
    <interactant intactId="EBI-948266">
        <id>O14901</id>
        <label>KLF11</label>
    </interactant>
    <organismsDiffer>false</organismsDiffer>
    <experiments>3</experiments>
</comment>
<comment type="interaction">
    <interactant intactId="EBI-720875">
        <id>Q96MW5</id>
    </interactant>
    <interactant intactId="EBI-10318831">
        <id>Q9P2K5-2</id>
        <label>MYEF2</label>
    </interactant>
    <organismsDiffer>false</organismsDiffer>
    <experiments>3</experiments>
</comment>
<comment type="interaction">
    <interactant intactId="EBI-720875">
        <id>Q96MW5</id>
    </interactant>
    <interactant intactId="EBI-6190702">
        <id>P28331-2</id>
        <label>NDUFS1</label>
    </interactant>
    <organismsDiffer>false</organismsDiffer>
    <experiments>3</experiments>
</comment>
<comment type="interaction">
    <interactant intactId="EBI-720875">
        <id>Q96MW5</id>
    </interactant>
    <interactant intactId="EBI-2811583">
        <id>Q9BVL2</id>
        <label>NUP58</label>
    </interactant>
    <organismsDiffer>false</organismsDiffer>
    <experiments>3</experiments>
</comment>
<comment type="interaction">
    <interactant intactId="EBI-720875">
        <id>Q96MW5</id>
    </interactant>
    <interactant intactId="EBI-711909">
        <id>P02766</id>
        <label>TTR</label>
    </interactant>
    <organismsDiffer>false</organismsDiffer>
    <experiments>3</experiments>
</comment>
<comment type="subcellular location">
    <subcellularLocation>
        <location evidence="3">Golgi apparatus membrane</location>
        <topology evidence="3">Peripheral membrane protein</topology>
    </subcellularLocation>
</comment>
<comment type="disease" evidence="4">
    <disease id="DI-01399">
        <name>Congenital disorder of glycosylation 2H</name>
        <acronym>CDG2H</acronym>
        <description>CDGs are a family of severe inherited diseases caused by a defect in protein N-glycosylation. They are characterized by under-glycosylated serum proteins. These multisystem disorders present with a wide variety of clinical features, such as disorders of the nervous system development, psychomotor retardation, dysmorphic features, hypotonia, coagulation disorders, and immunodeficiency. The broad spectrum of features reflects the critical role of N-glycoproteins during embryonic development, differentiation, and maintenance of cell functions.</description>
        <dbReference type="MIM" id="611182"/>
    </disease>
    <text>The disease is caused by variants affecting the gene represented in this entry.</text>
</comment>
<comment type="similarity">
    <text evidence="5">Belongs to the COG8 family.</text>
</comment>
<comment type="sequence caution" evidence="5">
    <conflict type="erroneous initiation">
        <sequence resource="EMBL-CDS" id="AAH17492"/>
    </conflict>
</comment>
<comment type="sequence caution" evidence="5">
    <conflict type="frameshift">
        <sequence resource="EMBL-CDS" id="BAB15301"/>
    </conflict>
</comment>
<accession>Q96MW5</accession>
<accession>Q0VAK2</accession>
<accession>Q8WVV6</accession>
<accession>Q9H6F8</accession>
<proteinExistence type="evidence at protein level"/>
<feature type="chain" id="PRO_0000213521" description="Conserved oligomeric Golgi complex subunit 8">
    <location>
        <begin position="1"/>
        <end position="612"/>
    </location>
</feature>
<feature type="region of interest" description="Disordered" evidence="2">
    <location>
        <begin position="568"/>
        <end position="612"/>
    </location>
</feature>
<feature type="sequence variant" id="VAR_047655" description="In dbSNP:rs3027.">
    <original>L</original>
    <variation>R</variation>
    <location>
        <position position="517"/>
    </location>
</feature>
<feature type="sequence conflict" description="In Ref. 1; BAB71157." evidence="5" ref="1">
    <original>Q</original>
    <variation>R</variation>
    <location>
        <position position="348"/>
    </location>
</feature>
<feature type="sequence conflict" description="In Ref. 1; BAB15301." evidence="5" ref="1">
    <original>L</original>
    <variation>H</variation>
    <location>
        <position position="399"/>
    </location>
</feature>
<organism>
    <name type="scientific">Homo sapiens</name>
    <name type="common">Human</name>
    <dbReference type="NCBI Taxonomy" id="9606"/>
    <lineage>
        <taxon>Eukaryota</taxon>
        <taxon>Metazoa</taxon>
        <taxon>Chordata</taxon>
        <taxon>Craniata</taxon>
        <taxon>Vertebrata</taxon>
        <taxon>Euteleostomi</taxon>
        <taxon>Mammalia</taxon>
        <taxon>Eutheria</taxon>
        <taxon>Euarchontoglires</taxon>
        <taxon>Primates</taxon>
        <taxon>Haplorrhini</taxon>
        <taxon>Catarrhini</taxon>
        <taxon>Hominidae</taxon>
        <taxon>Homo</taxon>
    </lineage>
</organism>
<gene>
    <name type="primary">COG8</name>
</gene>
<dbReference type="EMBL" id="AK056344">
    <property type="protein sequence ID" value="BAB71157.1"/>
    <property type="molecule type" value="mRNA"/>
</dbReference>
<dbReference type="EMBL" id="AK025968">
    <property type="protein sequence ID" value="BAB15301.1"/>
    <property type="status" value="ALT_FRAME"/>
    <property type="molecule type" value="mRNA"/>
</dbReference>
<dbReference type="EMBL" id="CH471092">
    <property type="protein sequence ID" value="EAW83266.1"/>
    <property type="molecule type" value="Genomic_DNA"/>
</dbReference>
<dbReference type="EMBL" id="BC017492">
    <property type="protein sequence ID" value="AAH17492.1"/>
    <property type="status" value="ALT_INIT"/>
    <property type="molecule type" value="mRNA"/>
</dbReference>
<dbReference type="EMBL" id="BC121022">
    <property type="protein sequence ID" value="AAI21023.1"/>
    <property type="molecule type" value="mRNA"/>
</dbReference>
<dbReference type="EMBL" id="BC121023">
    <property type="protein sequence ID" value="AAI21024.1"/>
    <property type="molecule type" value="mRNA"/>
</dbReference>
<dbReference type="CCDS" id="CCDS10876.1"/>
<dbReference type="RefSeq" id="NP_001366193.1">
    <property type="nucleotide sequence ID" value="NM_001379264.1"/>
</dbReference>
<dbReference type="RefSeq" id="NP_115758.3">
    <property type="nucleotide sequence ID" value="NM_032382.4"/>
</dbReference>
<dbReference type="SMR" id="Q96MW5"/>
<dbReference type="BioGRID" id="124063">
    <property type="interactions" value="50"/>
</dbReference>
<dbReference type="ComplexPortal" id="CPX-6199">
    <property type="entry name" value="COG tethering complex"/>
</dbReference>
<dbReference type="CORUM" id="Q96MW5"/>
<dbReference type="FunCoup" id="Q96MW5">
    <property type="interactions" value="2719"/>
</dbReference>
<dbReference type="IntAct" id="Q96MW5">
    <property type="interactions" value="53"/>
</dbReference>
<dbReference type="MINT" id="Q96MW5"/>
<dbReference type="STRING" id="9606.ENSP00000497669"/>
<dbReference type="ChEMBL" id="CHEMBL4105880"/>
<dbReference type="GlyGen" id="Q96MW5">
    <property type="glycosylation" value="1 site, 1 O-linked glycan (1 site)"/>
</dbReference>
<dbReference type="iPTMnet" id="Q96MW5"/>
<dbReference type="PhosphoSitePlus" id="Q96MW5"/>
<dbReference type="BioMuta" id="COG8"/>
<dbReference type="DMDM" id="215273958"/>
<dbReference type="jPOST" id="Q96MW5"/>
<dbReference type="MassIVE" id="Q96MW5"/>
<dbReference type="PaxDb" id="9606-ENSP00000305459"/>
<dbReference type="PeptideAtlas" id="Q96MW5"/>
<dbReference type="ProteomicsDB" id="77424"/>
<dbReference type="Pumba" id="Q96MW5"/>
<dbReference type="Antibodypedia" id="29849">
    <property type="antibodies" value="85 antibodies from 23 providers"/>
</dbReference>
<dbReference type="DNASU" id="84342"/>
<dbReference type="Ensembl" id="ENST00000306875.10">
    <property type="protein sequence ID" value="ENSP00000305459.6"/>
    <property type="gene ID" value="ENSG00000213380.16"/>
</dbReference>
<dbReference type="GeneID" id="84342"/>
<dbReference type="KEGG" id="hsa:84342"/>
<dbReference type="MANE-Select" id="ENST00000306875.10">
    <property type="protein sequence ID" value="ENSP00000305459.6"/>
    <property type="RefSeq nucleotide sequence ID" value="NM_032382.5"/>
    <property type="RefSeq protein sequence ID" value="NP_115758.3"/>
</dbReference>
<dbReference type="UCSC" id="uc002ewy.3">
    <property type="organism name" value="human"/>
</dbReference>
<dbReference type="AGR" id="HGNC:18623"/>
<dbReference type="CTD" id="84342"/>
<dbReference type="DisGeNET" id="84342"/>
<dbReference type="GeneCards" id="COG8"/>
<dbReference type="GeneReviews" id="COG8"/>
<dbReference type="HGNC" id="HGNC:18623">
    <property type="gene designation" value="COG8"/>
</dbReference>
<dbReference type="HPA" id="ENSG00000213380">
    <property type="expression patterns" value="Low tissue specificity"/>
</dbReference>
<dbReference type="MalaCards" id="COG8"/>
<dbReference type="MIM" id="606979">
    <property type="type" value="gene"/>
</dbReference>
<dbReference type="MIM" id="611182">
    <property type="type" value="phenotype"/>
</dbReference>
<dbReference type="neXtProt" id="NX_Q96MW5"/>
<dbReference type="OpenTargets" id="ENSG00000213380"/>
<dbReference type="Orphanet" id="95428">
    <property type="disease" value="COG8-CDG"/>
</dbReference>
<dbReference type="PharmGKB" id="PA38606"/>
<dbReference type="VEuPathDB" id="HostDB:ENSG00000213380"/>
<dbReference type="eggNOG" id="KOG2069">
    <property type="taxonomic scope" value="Eukaryota"/>
</dbReference>
<dbReference type="GeneTree" id="ENSGT00390000015893"/>
<dbReference type="InParanoid" id="Q96MW5"/>
<dbReference type="OMA" id="QRCIHGV"/>
<dbReference type="OrthoDB" id="1661054at2759"/>
<dbReference type="PAN-GO" id="Q96MW5">
    <property type="GO annotations" value="2 GO annotations based on evolutionary models"/>
</dbReference>
<dbReference type="PhylomeDB" id="Q96MW5"/>
<dbReference type="TreeFam" id="TF315000"/>
<dbReference type="PathwayCommons" id="Q96MW5"/>
<dbReference type="Reactome" id="R-HSA-6807878">
    <property type="pathway name" value="COPI-mediated anterograde transport"/>
</dbReference>
<dbReference type="Reactome" id="R-HSA-6811438">
    <property type="pathway name" value="Intra-Golgi traffic"/>
</dbReference>
<dbReference type="Reactome" id="R-HSA-6811440">
    <property type="pathway name" value="Retrograde transport at the Trans-Golgi-Network"/>
</dbReference>
<dbReference type="SignaLink" id="Q96MW5"/>
<dbReference type="BioGRID-ORCS" id="84342">
    <property type="hits" value="341 hits in 1163 CRISPR screens"/>
</dbReference>
<dbReference type="ChiTaRS" id="COG8">
    <property type="organism name" value="human"/>
</dbReference>
<dbReference type="GeneWiki" id="COG8"/>
<dbReference type="GenomeRNAi" id="84342"/>
<dbReference type="Pharos" id="Q96MW5">
    <property type="development level" value="Tbio"/>
</dbReference>
<dbReference type="PRO" id="PR:Q96MW5"/>
<dbReference type="Proteomes" id="UP000005640">
    <property type="component" value="Chromosome 16"/>
</dbReference>
<dbReference type="RNAct" id="Q96MW5">
    <property type="molecule type" value="protein"/>
</dbReference>
<dbReference type="Bgee" id="ENSG00000213380">
    <property type="expression patterns" value="Expressed in upper arm skin and 172 other cell types or tissues"/>
</dbReference>
<dbReference type="ExpressionAtlas" id="Q96MW5">
    <property type="expression patterns" value="baseline and differential"/>
</dbReference>
<dbReference type="GO" id="GO:0005794">
    <property type="term" value="C:Golgi apparatus"/>
    <property type="evidence" value="ECO:0000314"/>
    <property type="project" value="HPA"/>
</dbReference>
<dbReference type="GO" id="GO:0000139">
    <property type="term" value="C:Golgi membrane"/>
    <property type="evidence" value="ECO:0000304"/>
    <property type="project" value="Reactome"/>
</dbReference>
<dbReference type="GO" id="GO:0017119">
    <property type="term" value="C:Golgi transport complex"/>
    <property type="evidence" value="ECO:0000314"/>
    <property type="project" value="UniProtKB"/>
</dbReference>
<dbReference type="GO" id="GO:0016020">
    <property type="term" value="C:membrane"/>
    <property type="evidence" value="ECO:0007005"/>
    <property type="project" value="UniProtKB"/>
</dbReference>
<dbReference type="GO" id="GO:0032588">
    <property type="term" value="C:trans-Golgi network membrane"/>
    <property type="evidence" value="ECO:0000304"/>
    <property type="project" value="Reactome"/>
</dbReference>
<dbReference type="GO" id="GO:0070085">
    <property type="term" value="P:glycosylation"/>
    <property type="evidence" value="ECO:0000315"/>
    <property type="project" value="ComplexPortal"/>
</dbReference>
<dbReference type="GO" id="GO:0007030">
    <property type="term" value="P:Golgi organization"/>
    <property type="evidence" value="ECO:0000315"/>
    <property type="project" value="ComplexPortal"/>
</dbReference>
<dbReference type="GO" id="GO:0006891">
    <property type="term" value="P:intra-Golgi vesicle-mediated transport"/>
    <property type="evidence" value="ECO:0000318"/>
    <property type="project" value="GO_Central"/>
</dbReference>
<dbReference type="GO" id="GO:0015031">
    <property type="term" value="P:protein transport"/>
    <property type="evidence" value="ECO:0007669"/>
    <property type="project" value="UniProtKB-KW"/>
</dbReference>
<dbReference type="GO" id="GO:0000301">
    <property type="term" value="P:retrograde transport, vesicle recycling within Golgi"/>
    <property type="evidence" value="ECO:0000315"/>
    <property type="project" value="ComplexPortal"/>
</dbReference>
<dbReference type="InterPro" id="IPR007255">
    <property type="entry name" value="COG8"/>
</dbReference>
<dbReference type="InterPro" id="IPR016632">
    <property type="entry name" value="COG8_Metazoal_Plant"/>
</dbReference>
<dbReference type="InterPro" id="IPR016159">
    <property type="entry name" value="Cullin_repeat-like_dom_sf"/>
</dbReference>
<dbReference type="PANTHER" id="PTHR21311">
    <property type="entry name" value="CONSERVED OLIGOMERIC GOLGI COMPLEX COMPONENT 8"/>
    <property type="match status" value="1"/>
</dbReference>
<dbReference type="PANTHER" id="PTHR21311:SF0">
    <property type="entry name" value="CONSERVED OLIGOMERIC GOLGI COMPLEX SUBUNIT 8"/>
    <property type="match status" value="1"/>
</dbReference>
<dbReference type="Pfam" id="PF04124">
    <property type="entry name" value="Dor1"/>
    <property type="match status" value="1"/>
</dbReference>
<dbReference type="PIRSF" id="PIRSF015415">
    <property type="entry name" value="COG8"/>
    <property type="match status" value="1"/>
</dbReference>
<dbReference type="SUPFAM" id="SSF74788">
    <property type="entry name" value="Cullin repeat-like"/>
    <property type="match status" value="1"/>
</dbReference>
<keyword id="KW-0900">Congenital disorder of glycosylation</keyword>
<keyword id="KW-0333">Golgi apparatus</keyword>
<keyword id="KW-0472">Membrane</keyword>
<keyword id="KW-0653">Protein transport</keyword>
<keyword id="KW-1267">Proteomics identification</keyword>
<keyword id="KW-1185">Reference proteome</keyword>
<keyword id="KW-0813">Transport</keyword>
<protein>
    <recommendedName>
        <fullName>Conserved oligomeric Golgi complex subunit 8</fullName>
        <shortName>COG complex subunit 8</shortName>
    </recommendedName>
    <alternativeName>
        <fullName>Component of oligomeric Golgi complex 8</fullName>
    </alternativeName>
</protein>